<organism>
    <name type="scientific">Pyrobaculum aerophilum (strain ATCC 51768 / DSM 7523 / JCM 9630 / CIP 104966 / NBRC 100827 / IM2)</name>
    <dbReference type="NCBI Taxonomy" id="178306"/>
    <lineage>
        <taxon>Archaea</taxon>
        <taxon>Thermoproteota</taxon>
        <taxon>Thermoprotei</taxon>
        <taxon>Thermoproteales</taxon>
        <taxon>Thermoproteaceae</taxon>
        <taxon>Pyrobaculum</taxon>
    </lineage>
</organism>
<name>GLMS_PYRAE</name>
<evidence type="ECO:0000255" key="1">
    <source>
        <dbReference type="HAMAP-Rule" id="MF_00164"/>
    </source>
</evidence>
<sequence>MCGIFGIIFAERPRRPLGEILRRGLERLEYRGYDSAGVAVVDRGLVVKKDAGKVAEVAQRYGFDSLQGVVGLAHTRWATHGKPDQVNAHPHVDCRGVIAVVHNGIIEKYAELKEELMKRGHVFRSETDTEVIAHLVEEYKKQGLDTFSAFKKALSRVRGAYAIALIDAENPRAIYFARNLSPLIIGVGEGFNIVASDIPTVLDHTKRVIAVRDGEYGYITAGEVYIEADGVPQDVAARIEEIPWSAEMATKGGYPHFMLKEIYEQPESLASTAAGLEPAQIETVANALLAARNVYIVGAGTSYHAGLTLAFILPRLRITPIPVISSEYAIYEDLYDKDDLAIAISQSGETIDTIKAVKAMRERGVKVVAVTNVVGSTLSRESDVVLYTRAGPEIGVAATKTFTTQVLTLAAVYLTALRALGHDVAEHQRELKAVPDLARKTIEKTAGTAKELAKRLRQRHSAYYLGRGAALPVAMEGALKLKEVAYLHAEAYPAGESKHGPIALVEEGFPVIFVFSDPNTGEKTLSNVAEMKARGALTIGTVPARSDYAKKLDVAIEVPQTSELFAPILHVIPLQMLAYFTAVERGYDPDKPRNLAKTVTVE</sequence>
<proteinExistence type="inferred from homology"/>
<accession>Q8ZTZ0</accession>
<keyword id="KW-0032">Aminotransferase</keyword>
<keyword id="KW-0963">Cytoplasm</keyword>
<keyword id="KW-0315">Glutamine amidotransferase</keyword>
<keyword id="KW-1185">Reference proteome</keyword>
<keyword id="KW-0677">Repeat</keyword>
<keyword id="KW-0808">Transferase</keyword>
<protein>
    <recommendedName>
        <fullName evidence="1">Glutamine--fructose-6-phosphate aminotransferase [isomerizing]</fullName>
        <ecNumber evidence="1">2.6.1.16</ecNumber>
    </recommendedName>
    <alternativeName>
        <fullName evidence="1">D-fructose-6-phosphate amidotransferase</fullName>
    </alternativeName>
    <alternativeName>
        <fullName evidence="1">GFAT</fullName>
    </alternativeName>
    <alternativeName>
        <fullName evidence="1">Glucosamine-6-phosphate synthase</fullName>
    </alternativeName>
    <alternativeName>
        <fullName evidence="1">Hexosephosphate aminotransferase</fullName>
    </alternativeName>
    <alternativeName>
        <fullName evidence="1">L-glutamine--D-fructose-6-phosphate amidotransferase</fullName>
    </alternativeName>
</protein>
<dbReference type="EC" id="2.6.1.16" evidence="1"/>
<dbReference type="EMBL" id="AE009441">
    <property type="protein sequence ID" value="AAL64619.1"/>
    <property type="molecule type" value="Genomic_DNA"/>
</dbReference>
<dbReference type="RefSeq" id="WP_011009087.1">
    <property type="nucleotide sequence ID" value="NC_003364.1"/>
</dbReference>
<dbReference type="SMR" id="Q8ZTZ0"/>
<dbReference type="FunCoup" id="Q8ZTZ0">
    <property type="interactions" value="80"/>
</dbReference>
<dbReference type="STRING" id="178306.PAE3025"/>
<dbReference type="EnsemblBacteria" id="AAL64619">
    <property type="protein sequence ID" value="AAL64619"/>
    <property type="gene ID" value="PAE3025"/>
</dbReference>
<dbReference type="GeneID" id="1463787"/>
<dbReference type="KEGG" id="pai:PAE3025"/>
<dbReference type="PATRIC" id="fig|178306.9.peg.2275"/>
<dbReference type="eggNOG" id="arCOG00057">
    <property type="taxonomic scope" value="Archaea"/>
</dbReference>
<dbReference type="HOGENOM" id="CLU_012520_7_0_2"/>
<dbReference type="InParanoid" id="Q8ZTZ0"/>
<dbReference type="Proteomes" id="UP000002439">
    <property type="component" value="Chromosome"/>
</dbReference>
<dbReference type="GO" id="GO:0005737">
    <property type="term" value="C:cytoplasm"/>
    <property type="evidence" value="ECO:0007669"/>
    <property type="project" value="UniProtKB-SubCell"/>
</dbReference>
<dbReference type="GO" id="GO:0097367">
    <property type="term" value="F:carbohydrate derivative binding"/>
    <property type="evidence" value="ECO:0007669"/>
    <property type="project" value="InterPro"/>
</dbReference>
<dbReference type="GO" id="GO:0004360">
    <property type="term" value="F:glutamine-fructose-6-phosphate transaminase (isomerizing) activity"/>
    <property type="evidence" value="ECO:0000318"/>
    <property type="project" value="GO_Central"/>
</dbReference>
<dbReference type="GO" id="GO:0005975">
    <property type="term" value="P:carbohydrate metabolic process"/>
    <property type="evidence" value="ECO:0007669"/>
    <property type="project" value="UniProtKB-UniRule"/>
</dbReference>
<dbReference type="GO" id="GO:0006002">
    <property type="term" value="P:fructose 6-phosphate metabolic process"/>
    <property type="evidence" value="ECO:0000318"/>
    <property type="project" value="GO_Central"/>
</dbReference>
<dbReference type="GO" id="GO:0006487">
    <property type="term" value="P:protein N-linked glycosylation"/>
    <property type="evidence" value="ECO:0000318"/>
    <property type="project" value="GO_Central"/>
</dbReference>
<dbReference type="GO" id="GO:0006047">
    <property type="term" value="P:UDP-N-acetylglucosamine metabolic process"/>
    <property type="evidence" value="ECO:0000318"/>
    <property type="project" value="GO_Central"/>
</dbReference>
<dbReference type="CDD" id="cd00714">
    <property type="entry name" value="GFAT"/>
    <property type="match status" value="1"/>
</dbReference>
<dbReference type="CDD" id="cd05008">
    <property type="entry name" value="SIS_GlmS_GlmD_1"/>
    <property type="match status" value="1"/>
</dbReference>
<dbReference type="CDD" id="cd05009">
    <property type="entry name" value="SIS_GlmS_GlmD_2"/>
    <property type="match status" value="1"/>
</dbReference>
<dbReference type="FunFam" id="3.40.50.10490:FF:000001">
    <property type="entry name" value="Glutamine--fructose-6-phosphate aminotransferase [isomerizing]"/>
    <property type="match status" value="1"/>
</dbReference>
<dbReference type="FunFam" id="3.60.20.10:FF:000006">
    <property type="entry name" value="Glutamine--fructose-6-phosphate aminotransferase [isomerizing]"/>
    <property type="match status" value="1"/>
</dbReference>
<dbReference type="Gene3D" id="3.40.50.10490">
    <property type="entry name" value="Glucose-6-phosphate isomerase like protein, domain 1"/>
    <property type="match status" value="2"/>
</dbReference>
<dbReference type="Gene3D" id="3.60.20.10">
    <property type="entry name" value="Glutamine Phosphoribosylpyrophosphate, subunit 1, domain 1"/>
    <property type="match status" value="1"/>
</dbReference>
<dbReference type="HAMAP" id="MF_00164">
    <property type="entry name" value="GlmS"/>
    <property type="match status" value="1"/>
</dbReference>
<dbReference type="InterPro" id="IPR017932">
    <property type="entry name" value="GATase_2_dom"/>
</dbReference>
<dbReference type="InterPro" id="IPR005855">
    <property type="entry name" value="GFAT"/>
</dbReference>
<dbReference type="InterPro" id="IPR047084">
    <property type="entry name" value="GFAT_N"/>
</dbReference>
<dbReference type="InterPro" id="IPR035466">
    <property type="entry name" value="GlmS/AgaS_SIS"/>
</dbReference>
<dbReference type="InterPro" id="IPR035490">
    <property type="entry name" value="GlmS/FrlB_SIS"/>
</dbReference>
<dbReference type="InterPro" id="IPR029055">
    <property type="entry name" value="Ntn_hydrolases_N"/>
</dbReference>
<dbReference type="InterPro" id="IPR001347">
    <property type="entry name" value="SIS_dom"/>
</dbReference>
<dbReference type="InterPro" id="IPR046348">
    <property type="entry name" value="SIS_dom_sf"/>
</dbReference>
<dbReference type="NCBIfam" id="TIGR01135">
    <property type="entry name" value="glmS"/>
    <property type="match status" value="1"/>
</dbReference>
<dbReference type="NCBIfam" id="NF001484">
    <property type="entry name" value="PRK00331.1"/>
    <property type="match status" value="1"/>
</dbReference>
<dbReference type="PANTHER" id="PTHR10937">
    <property type="entry name" value="GLUCOSAMINE--FRUCTOSE-6-PHOSPHATE AMINOTRANSFERASE, ISOMERIZING"/>
    <property type="match status" value="1"/>
</dbReference>
<dbReference type="PANTHER" id="PTHR10937:SF0">
    <property type="entry name" value="GLUTAMINE--FRUCTOSE-6-PHOSPHATE TRANSAMINASE (ISOMERIZING)"/>
    <property type="match status" value="1"/>
</dbReference>
<dbReference type="Pfam" id="PF13522">
    <property type="entry name" value="GATase_6"/>
    <property type="match status" value="1"/>
</dbReference>
<dbReference type="Pfam" id="PF01380">
    <property type="entry name" value="SIS"/>
    <property type="match status" value="2"/>
</dbReference>
<dbReference type="SUPFAM" id="SSF56235">
    <property type="entry name" value="N-terminal nucleophile aminohydrolases (Ntn hydrolases)"/>
    <property type="match status" value="1"/>
</dbReference>
<dbReference type="SUPFAM" id="SSF53697">
    <property type="entry name" value="SIS domain"/>
    <property type="match status" value="1"/>
</dbReference>
<dbReference type="PROSITE" id="PS51278">
    <property type="entry name" value="GATASE_TYPE_2"/>
    <property type="match status" value="1"/>
</dbReference>
<dbReference type="PROSITE" id="PS51464">
    <property type="entry name" value="SIS"/>
    <property type="match status" value="2"/>
</dbReference>
<comment type="function">
    <text evidence="1">Catalyzes the first step in hexosamine metabolism, converting fructose-6P into glucosamine-6P using glutamine as a nitrogen source.</text>
</comment>
<comment type="catalytic activity">
    <reaction evidence="1">
        <text>D-fructose 6-phosphate + L-glutamine = D-glucosamine 6-phosphate + L-glutamate</text>
        <dbReference type="Rhea" id="RHEA:13237"/>
        <dbReference type="ChEBI" id="CHEBI:29985"/>
        <dbReference type="ChEBI" id="CHEBI:58359"/>
        <dbReference type="ChEBI" id="CHEBI:58725"/>
        <dbReference type="ChEBI" id="CHEBI:61527"/>
        <dbReference type="EC" id="2.6.1.16"/>
    </reaction>
</comment>
<comment type="subunit">
    <text evidence="1">Homodimer.</text>
</comment>
<comment type="subcellular location">
    <subcellularLocation>
        <location evidence="1">Cytoplasm</location>
    </subcellularLocation>
</comment>
<feature type="initiator methionine" description="Removed" evidence="1">
    <location>
        <position position="1"/>
    </location>
</feature>
<feature type="chain" id="PRO_0000135429" description="Glutamine--fructose-6-phosphate aminotransferase [isomerizing]">
    <location>
        <begin position="2"/>
        <end position="602"/>
    </location>
</feature>
<feature type="domain" description="Glutamine amidotransferase type-2" evidence="1">
    <location>
        <begin position="2"/>
        <end position="222"/>
    </location>
</feature>
<feature type="domain" description="SIS 1" evidence="1">
    <location>
        <begin position="284"/>
        <end position="422"/>
    </location>
</feature>
<feature type="domain" description="SIS 2" evidence="1">
    <location>
        <begin position="452"/>
        <end position="592"/>
    </location>
</feature>
<feature type="active site" description="Nucleophile; for GATase activity" evidence="1">
    <location>
        <position position="2"/>
    </location>
</feature>
<feature type="active site" description="For Fru-6P isomerization activity" evidence="1">
    <location>
        <position position="597"/>
    </location>
</feature>
<gene>
    <name evidence="1" type="primary">glmS</name>
    <name type="ordered locus">PAE3025</name>
</gene>
<reference key="1">
    <citation type="journal article" date="2002" name="Proc. Natl. Acad. Sci. U.S.A.">
        <title>Genome sequence of the hyperthermophilic crenarchaeon Pyrobaculum aerophilum.</title>
        <authorList>
            <person name="Fitz-Gibbon S.T."/>
            <person name="Ladner H."/>
            <person name="Kim U.-J."/>
            <person name="Stetter K.O."/>
            <person name="Simon M.I."/>
            <person name="Miller J.H."/>
        </authorList>
    </citation>
    <scope>NUCLEOTIDE SEQUENCE [LARGE SCALE GENOMIC DNA]</scope>
    <source>
        <strain>ATCC 51768 / DSM 7523 / JCM 9630 / CIP 104966 / NBRC 100827 / IM2</strain>
    </source>
</reference>